<organism>
    <name type="scientific">Cutibacterium acnes (strain DSM 16379 / KPA171202)</name>
    <name type="common">Propionibacterium acnes</name>
    <dbReference type="NCBI Taxonomy" id="267747"/>
    <lineage>
        <taxon>Bacteria</taxon>
        <taxon>Bacillati</taxon>
        <taxon>Actinomycetota</taxon>
        <taxon>Actinomycetes</taxon>
        <taxon>Propionibacteriales</taxon>
        <taxon>Propionibacteriaceae</taxon>
        <taxon>Cutibacterium</taxon>
    </lineage>
</organism>
<feature type="chain" id="PRO_0000209266" description="Bifunctional glutamine synthetase adenylyltransferase/adenylyl-removing enzyme">
    <location>
        <begin position="1"/>
        <end position="983"/>
    </location>
</feature>
<feature type="region of interest" description="Adenylyl removase" evidence="1">
    <location>
        <begin position="1"/>
        <end position="490"/>
    </location>
</feature>
<feature type="region of interest" description="Adenylyl transferase" evidence="1">
    <location>
        <begin position="496"/>
        <end position="983"/>
    </location>
</feature>
<dbReference type="EC" id="2.7.7.89" evidence="1"/>
<dbReference type="EC" id="2.7.7.42" evidence="1"/>
<dbReference type="EMBL" id="AE017283">
    <property type="protein sequence ID" value="AAT82422.1"/>
    <property type="molecule type" value="Genomic_DNA"/>
</dbReference>
<dbReference type="RefSeq" id="WP_009640418.1">
    <property type="nucleotide sequence ID" value="NZ_CP025935.1"/>
</dbReference>
<dbReference type="SMR" id="Q6A9Z4"/>
<dbReference type="EnsemblBacteria" id="AAT82422">
    <property type="protein sequence ID" value="AAT82422"/>
    <property type="gene ID" value="PPA0666"/>
</dbReference>
<dbReference type="KEGG" id="pac:PPA0666"/>
<dbReference type="eggNOG" id="COG1391">
    <property type="taxonomic scope" value="Bacteria"/>
</dbReference>
<dbReference type="HOGENOM" id="CLU_006233_1_0_11"/>
<dbReference type="Proteomes" id="UP000000603">
    <property type="component" value="Chromosome"/>
</dbReference>
<dbReference type="GO" id="GO:0005829">
    <property type="term" value="C:cytosol"/>
    <property type="evidence" value="ECO:0007669"/>
    <property type="project" value="TreeGrafter"/>
</dbReference>
<dbReference type="GO" id="GO:0008882">
    <property type="term" value="F:[glutamate-ammonia-ligase] adenylyltransferase activity"/>
    <property type="evidence" value="ECO:0007669"/>
    <property type="project" value="UniProtKB-UniRule"/>
</dbReference>
<dbReference type="GO" id="GO:0047388">
    <property type="term" value="F:[glutamine synthetase]-adenylyl-L-tyrosine phosphorylase activity"/>
    <property type="evidence" value="ECO:0007669"/>
    <property type="project" value="UniProtKB-EC"/>
</dbReference>
<dbReference type="GO" id="GO:0005524">
    <property type="term" value="F:ATP binding"/>
    <property type="evidence" value="ECO:0007669"/>
    <property type="project" value="UniProtKB-UniRule"/>
</dbReference>
<dbReference type="GO" id="GO:0000287">
    <property type="term" value="F:magnesium ion binding"/>
    <property type="evidence" value="ECO:0007669"/>
    <property type="project" value="UniProtKB-UniRule"/>
</dbReference>
<dbReference type="GO" id="GO:0000820">
    <property type="term" value="P:regulation of glutamine family amino acid metabolic process"/>
    <property type="evidence" value="ECO:0007669"/>
    <property type="project" value="UniProtKB-UniRule"/>
</dbReference>
<dbReference type="CDD" id="cd05401">
    <property type="entry name" value="NT_GlnE_GlnD_like"/>
    <property type="match status" value="2"/>
</dbReference>
<dbReference type="Gene3D" id="3.30.460.10">
    <property type="entry name" value="Beta Polymerase, domain 2"/>
    <property type="match status" value="2"/>
</dbReference>
<dbReference type="Gene3D" id="1.20.120.330">
    <property type="entry name" value="Nucleotidyltransferases domain 2"/>
    <property type="match status" value="2"/>
</dbReference>
<dbReference type="HAMAP" id="MF_00802">
    <property type="entry name" value="GlnE"/>
    <property type="match status" value="1"/>
</dbReference>
<dbReference type="InterPro" id="IPR023057">
    <property type="entry name" value="GlnE"/>
</dbReference>
<dbReference type="InterPro" id="IPR005190">
    <property type="entry name" value="GlnE_rpt_dom"/>
</dbReference>
<dbReference type="InterPro" id="IPR043519">
    <property type="entry name" value="NT_sf"/>
</dbReference>
<dbReference type="InterPro" id="IPR013546">
    <property type="entry name" value="PII_UdlTrfase/GS_AdlTrfase"/>
</dbReference>
<dbReference type="NCBIfam" id="NF010707">
    <property type="entry name" value="PRK14109.1"/>
    <property type="match status" value="1"/>
</dbReference>
<dbReference type="PANTHER" id="PTHR30621:SF0">
    <property type="entry name" value="BIFUNCTIONAL GLUTAMINE SYNTHETASE ADENYLYLTRANSFERASE_ADENYLYL-REMOVING ENZYME"/>
    <property type="match status" value="1"/>
</dbReference>
<dbReference type="PANTHER" id="PTHR30621">
    <property type="entry name" value="GLUTAMINE SYNTHETASE ADENYLYLTRANSFERASE"/>
    <property type="match status" value="1"/>
</dbReference>
<dbReference type="Pfam" id="PF08335">
    <property type="entry name" value="GlnD_UR_UTase"/>
    <property type="match status" value="2"/>
</dbReference>
<dbReference type="Pfam" id="PF03710">
    <property type="entry name" value="GlnE"/>
    <property type="match status" value="2"/>
</dbReference>
<dbReference type="SUPFAM" id="SSF81301">
    <property type="entry name" value="Nucleotidyltransferase"/>
    <property type="match status" value="2"/>
</dbReference>
<dbReference type="SUPFAM" id="SSF81593">
    <property type="entry name" value="Nucleotidyltransferase substrate binding subunit/domain"/>
    <property type="match status" value="2"/>
</dbReference>
<comment type="function">
    <text evidence="1">Involved in the regulation of glutamine synthetase GlnA, a key enzyme in the process to assimilate ammonia. When cellular nitrogen levels are high, the C-terminal adenylyl transferase (AT) inactivates GlnA by covalent transfer of an adenylyl group from ATP to specific tyrosine residue of GlnA, thus reducing its activity. Conversely, when nitrogen levels are low, the N-terminal adenylyl removase (AR) activates GlnA by removing the adenylyl group by phosphorolysis, increasing its activity. The regulatory region of GlnE binds the signal transduction protein PII (GlnB) which indicates the nitrogen status of the cell.</text>
</comment>
<comment type="catalytic activity">
    <reaction evidence="1">
        <text>[glutamine synthetase]-O(4)-(5'-adenylyl)-L-tyrosine + phosphate = [glutamine synthetase]-L-tyrosine + ADP</text>
        <dbReference type="Rhea" id="RHEA:43716"/>
        <dbReference type="Rhea" id="RHEA-COMP:10660"/>
        <dbReference type="Rhea" id="RHEA-COMP:10661"/>
        <dbReference type="ChEBI" id="CHEBI:43474"/>
        <dbReference type="ChEBI" id="CHEBI:46858"/>
        <dbReference type="ChEBI" id="CHEBI:83624"/>
        <dbReference type="ChEBI" id="CHEBI:456216"/>
        <dbReference type="EC" id="2.7.7.89"/>
    </reaction>
</comment>
<comment type="catalytic activity">
    <reaction evidence="1">
        <text>[glutamine synthetase]-L-tyrosine + ATP = [glutamine synthetase]-O(4)-(5'-adenylyl)-L-tyrosine + diphosphate</text>
        <dbReference type="Rhea" id="RHEA:18589"/>
        <dbReference type="Rhea" id="RHEA-COMP:10660"/>
        <dbReference type="Rhea" id="RHEA-COMP:10661"/>
        <dbReference type="ChEBI" id="CHEBI:30616"/>
        <dbReference type="ChEBI" id="CHEBI:33019"/>
        <dbReference type="ChEBI" id="CHEBI:46858"/>
        <dbReference type="ChEBI" id="CHEBI:83624"/>
        <dbReference type="EC" id="2.7.7.42"/>
    </reaction>
</comment>
<comment type="cofactor">
    <cofactor evidence="1">
        <name>Mg(2+)</name>
        <dbReference type="ChEBI" id="CHEBI:18420"/>
    </cofactor>
</comment>
<comment type="similarity">
    <text evidence="1">Belongs to the GlnE family.</text>
</comment>
<keyword id="KW-0067">ATP-binding</keyword>
<keyword id="KW-0460">Magnesium</keyword>
<keyword id="KW-0511">Multifunctional enzyme</keyword>
<keyword id="KW-0547">Nucleotide-binding</keyword>
<keyword id="KW-0548">Nucleotidyltransferase</keyword>
<keyword id="KW-0808">Transferase</keyword>
<reference key="1">
    <citation type="journal article" date="2004" name="Science">
        <title>The complete genome sequence of Propionibacterium acnes, a commensal of human skin.</title>
        <authorList>
            <person name="Brueggemann H."/>
            <person name="Henne A."/>
            <person name="Hoster F."/>
            <person name="Liesegang H."/>
            <person name="Wiezer A."/>
            <person name="Strittmatter A."/>
            <person name="Hujer S."/>
            <person name="Duerre P."/>
            <person name="Gottschalk G."/>
        </authorList>
    </citation>
    <scope>NUCLEOTIDE SEQUENCE [LARGE SCALE GENOMIC DNA]</scope>
    <source>
        <strain>DSM 16379 / KPA171202</strain>
    </source>
</reference>
<evidence type="ECO:0000255" key="1">
    <source>
        <dbReference type="HAMAP-Rule" id="MF_00802"/>
    </source>
</evidence>
<gene>
    <name evidence="1" type="primary">glnE</name>
    <name type="ordered locus">PPA0666</name>
</gene>
<accession>Q6A9Z4</accession>
<sequence length="983" mass="107099">MDRKSSVTIDLLRLGVMDTDAASANHHRIAENIGADPNRLADWEHHLETCCDPDLALNVLAELAQDSAQCLGEVLDHDASACRLVRLLGASSELGRHLIAHPDDLAEVIRDPVRLGHDEICDDLLEVVGAHKEGEFTVAGTPTGPASDRLRLANRRHLVRIASRDVSADDPTEIIEDVAAELADLADGIVTAALALARADCPDHADARLAIIAMGKCGAQELNYISDVDVMYVAEPANDDVSGASAVTIATKLAASVARMCSAHSGAGSIWQVDAALRPEGNAGPLVRTMDSMRTYYEKWAKNWEFQALLKARPMAGDLDLGQRFVEMVSPMVWQVGEAEGFVPETRAMRTRVVSLIAAKNKGREIKLGAGGLRDVEFTAQLLQLVHGRQDESLRVRATLPALRALAAGGYISRGAAERLKEAYRLERVMEHRVQMFRLRRTHLLPDDEDGLRRLARAVGLRTADEVRRVWTATSKAVLRAHGQVFYSPVVEAVARIPTQDLRMSAEAAKVRLSALGFHDEDAGLRHIEALTSGTSRAVRIQTALMPAMLAWLADGPSPDHGLLAFRQVSEALGESPWYLRALRDEGAMAQRLAVVLSTSRYAVDVLTRAPETVQVLVDDDLTPLSREDLARQMNAVARRHHDVEEAVGAIRAVRRRKLFRILVADILNVTGIRRIGQALTDLTGATIDAALTAVSREVEDAPPIGIVAMGRWGGQELSYASDADCLFVVGDGPGVGEKALKIVTKLRNLLGKHGADPAVVLDADLRPEGRSGPMVRSLESYRKYYGKWSSTWESQALLRASHGAGDRELTNELLEYVDQVRYPADGLTGSQLAEIRKLKARMESERIPRGVDPRRHLKLGPGGLSDIEWTAQIIQLQHAGHDPALRTTSTIDALNAALAAGYIDEGQHAKLCDSWLAASRLRNAIMVVRGRPSDVIPSDSTDLDVIAKASGMGQGASEHLVEDHLRHCRRASRVVDAVFWNQ</sequence>
<proteinExistence type="inferred from homology"/>
<name>GLNE_CUTAK</name>
<protein>
    <recommendedName>
        <fullName evidence="1">Bifunctional glutamine synthetase adenylyltransferase/adenylyl-removing enzyme</fullName>
    </recommendedName>
    <alternativeName>
        <fullName evidence="1">ATP:glutamine synthetase adenylyltransferase</fullName>
    </alternativeName>
    <alternativeName>
        <fullName evidence="1">ATase</fullName>
    </alternativeName>
    <domain>
        <recommendedName>
            <fullName evidence="1">Glutamine synthetase adenylyl-L-tyrosine phosphorylase</fullName>
            <ecNumber evidence="1">2.7.7.89</ecNumber>
        </recommendedName>
        <alternativeName>
            <fullName evidence="1">Adenylyl removase</fullName>
            <shortName evidence="1">AR</shortName>
            <shortName evidence="1">AT-N</shortName>
        </alternativeName>
    </domain>
    <domain>
        <recommendedName>
            <fullName evidence="1">Glutamine synthetase adenylyl transferase</fullName>
            <ecNumber evidence="1">2.7.7.42</ecNumber>
        </recommendedName>
        <alternativeName>
            <fullName evidence="1">Adenylyl transferase</fullName>
            <shortName evidence="1">AT</shortName>
            <shortName evidence="1">AT-C</shortName>
        </alternativeName>
    </domain>
</protein>